<dbReference type="EMBL" id="AE005672">
    <property type="protein sequence ID" value="AAK74415.1"/>
    <property type="molecule type" value="Genomic_DNA"/>
</dbReference>
<dbReference type="PIR" id="F95027">
    <property type="entry name" value="F95027"/>
</dbReference>
<dbReference type="RefSeq" id="WP_001118385.1">
    <property type="nucleotide sequence ID" value="NZ_CP155539.1"/>
</dbReference>
<dbReference type="SMR" id="P66359"/>
<dbReference type="PaxDb" id="170187-SP_0235"/>
<dbReference type="EnsemblBacteria" id="AAK74415">
    <property type="protein sequence ID" value="AAK74415"/>
    <property type="gene ID" value="SP_0235"/>
</dbReference>
<dbReference type="GeneID" id="93964226"/>
<dbReference type="KEGG" id="spn:SP_0235"/>
<dbReference type="eggNOG" id="COG0100">
    <property type="taxonomic scope" value="Bacteria"/>
</dbReference>
<dbReference type="PhylomeDB" id="P66359"/>
<dbReference type="BioCyc" id="SPNE170187:G1FZB-239-MONOMER"/>
<dbReference type="Proteomes" id="UP000000585">
    <property type="component" value="Chromosome"/>
</dbReference>
<dbReference type="GO" id="GO:1990904">
    <property type="term" value="C:ribonucleoprotein complex"/>
    <property type="evidence" value="ECO:0007669"/>
    <property type="project" value="UniProtKB-KW"/>
</dbReference>
<dbReference type="GO" id="GO:0005840">
    <property type="term" value="C:ribosome"/>
    <property type="evidence" value="ECO:0007669"/>
    <property type="project" value="UniProtKB-KW"/>
</dbReference>
<dbReference type="GO" id="GO:0019843">
    <property type="term" value="F:rRNA binding"/>
    <property type="evidence" value="ECO:0007669"/>
    <property type="project" value="UniProtKB-UniRule"/>
</dbReference>
<dbReference type="GO" id="GO:0003735">
    <property type="term" value="F:structural constituent of ribosome"/>
    <property type="evidence" value="ECO:0007669"/>
    <property type="project" value="InterPro"/>
</dbReference>
<dbReference type="GO" id="GO:0006412">
    <property type="term" value="P:translation"/>
    <property type="evidence" value="ECO:0007669"/>
    <property type="project" value="UniProtKB-UniRule"/>
</dbReference>
<dbReference type="FunFam" id="3.30.420.80:FF:000001">
    <property type="entry name" value="30S ribosomal protein S11"/>
    <property type="match status" value="1"/>
</dbReference>
<dbReference type="Gene3D" id="3.30.420.80">
    <property type="entry name" value="Ribosomal protein S11"/>
    <property type="match status" value="1"/>
</dbReference>
<dbReference type="HAMAP" id="MF_01310">
    <property type="entry name" value="Ribosomal_uS11"/>
    <property type="match status" value="1"/>
</dbReference>
<dbReference type="InterPro" id="IPR001971">
    <property type="entry name" value="Ribosomal_uS11"/>
</dbReference>
<dbReference type="InterPro" id="IPR019981">
    <property type="entry name" value="Ribosomal_uS11_bac-type"/>
</dbReference>
<dbReference type="InterPro" id="IPR018102">
    <property type="entry name" value="Ribosomal_uS11_CS"/>
</dbReference>
<dbReference type="InterPro" id="IPR036967">
    <property type="entry name" value="Ribosomal_uS11_sf"/>
</dbReference>
<dbReference type="NCBIfam" id="NF003698">
    <property type="entry name" value="PRK05309.1"/>
    <property type="match status" value="1"/>
</dbReference>
<dbReference type="NCBIfam" id="TIGR03632">
    <property type="entry name" value="uS11_bact"/>
    <property type="match status" value="1"/>
</dbReference>
<dbReference type="PANTHER" id="PTHR11759">
    <property type="entry name" value="40S RIBOSOMAL PROTEIN S14/30S RIBOSOMAL PROTEIN S11"/>
    <property type="match status" value="1"/>
</dbReference>
<dbReference type="Pfam" id="PF00411">
    <property type="entry name" value="Ribosomal_S11"/>
    <property type="match status" value="1"/>
</dbReference>
<dbReference type="PIRSF" id="PIRSF002131">
    <property type="entry name" value="Ribosomal_S11"/>
    <property type="match status" value="1"/>
</dbReference>
<dbReference type="SUPFAM" id="SSF53137">
    <property type="entry name" value="Translational machinery components"/>
    <property type="match status" value="1"/>
</dbReference>
<dbReference type="PROSITE" id="PS00054">
    <property type="entry name" value="RIBOSOMAL_S11"/>
    <property type="match status" value="1"/>
</dbReference>
<gene>
    <name evidence="1" type="primary">rpsK</name>
    <name type="ordered locus">SP_0235</name>
</gene>
<organism>
    <name type="scientific">Streptococcus pneumoniae serotype 4 (strain ATCC BAA-334 / TIGR4)</name>
    <dbReference type="NCBI Taxonomy" id="170187"/>
    <lineage>
        <taxon>Bacteria</taxon>
        <taxon>Bacillati</taxon>
        <taxon>Bacillota</taxon>
        <taxon>Bacilli</taxon>
        <taxon>Lactobacillales</taxon>
        <taxon>Streptococcaceae</taxon>
        <taxon>Streptococcus</taxon>
    </lineage>
</organism>
<protein>
    <recommendedName>
        <fullName evidence="1">Small ribosomal subunit protein uS11</fullName>
    </recommendedName>
    <alternativeName>
        <fullName evidence="2">30S ribosomal protein S11</fullName>
    </alternativeName>
</protein>
<proteinExistence type="inferred from homology"/>
<reference key="1">
    <citation type="journal article" date="2001" name="Science">
        <title>Complete genome sequence of a virulent isolate of Streptococcus pneumoniae.</title>
        <authorList>
            <person name="Tettelin H."/>
            <person name="Nelson K.E."/>
            <person name="Paulsen I.T."/>
            <person name="Eisen J.A."/>
            <person name="Read T.D."/>
            <person name="Peterson S.N."/>
            <person name="Heidelberg J.F."/>
            <person name="DeBoy R.T."/>
            <person name="Haft D.H."/>
            <person name="Dodson R.J."/>
            <person name="Durkin A.S."/>
            <person name="Gwinn M.L."/>
            <person name="Kolonay J.F."/>
            <person name="Nelson W.C."/>
            <person name="Peterson J.D."/>
            <person name="Umayam L.A."/>
            <person name="White O."/>
            <person name="Salzberg S.L."/>
            <person name="Lewis M.R."/>
            <person name="Radune D."/>
            <person name="Holtzapple E.K."/>
            <person name="Khouri H.M."/>
            <person name="Wolf A.M."/>
            <person name="Utterback T.R."/>
            <person name="Hansen C.L."/>
            <person name="McDonald L.A."/>
            <person name="Feldblyum T.V."/>
            <person name="Angiuoli S.V."/>
            <person name="Dickinson T."/>
            <person name="Hickey E.K."/>
            <person name="Holt I.E."/>
            <person name="Loftus B.J."/>
            <person name="Yang F."/>
            <person name="Smith H.O."/>
            <person name="Venter J.C."/>
            <person name="Dougherty B.A."/>
            <person name="Morrison D.A."/>
            <person name="Hollingshead S.K."/>
            <person name="Fraser C.M."/>
        </authorList>
    </citation>
    <scope>NUCLEOTIDE SEQUENCE [LARGE SCALE GENOMIC DNA]</scope>
    <source>
        <strain>ATCC BAA-334 / TIGR4</strain>
    </source>
</reference>
<feature type="chain" id="PRO_0000123233" description="Small ribosomal subunit protein uS11">
    <location>
        <begin position="1"/>
        <end position="127"/>
    </location>
</feature>
<name>RS11_STRPN</name>
<accession>P66359</accession>
<accession>Q97ST8</accession>
<sequence>MAKPTRKRRVKKNIESGIAHIHATFNNTIVMITDVHGNAIAWSSAGALGFKGSRKSTPFAAQMASEAAAKSAQEHGLKSVEVTVKGPGSGRESAIRALAAAGLEVTAIRDVTPVPHNGARPPKRRRV</sequence>
<evidence type="ECO:0000255" key="1">
    <source>
        <dbReference type="HAMAP-Rule" id="MF_01310"/>
    </source>
</evidence>
<evidence type="ECO:0000305" key="2"/>
<comment type="function">
    <text evidence="1">Located on the platform of the 30S subunit, it bridges several disparate RNA helices of the 16S rRNA. Forms part of the Shine-Dalgarno cleft in the 70S ribosome.</text>
</comment>
<comment type="subunit">
    <text evidence="1">Part of the 30S ribosomal subunit. Interacts with proteins S7 and S18. Binds to IF-3.</text>
</comment>
<comment type="similarity">
    <text evidence="1">Belongs to the universal ribosomal protein uS11 family.</text>
</comment>
<keyword id="KW-1185">Reference proteome</keyword>
<keyword id="KW-0687">Ribonucleoprotein</keyword>
<keyword id="KW-0689">Ribosomal protein</keyword>
<keyword id="KW-0694">RNA-binding</keyword>
<keyword id="KW-0699">rRNA-binding</keyword>